<reference key="1">
    <citation type="submission" date="2007-02" db="EMBL/GenBank/DDBJ databases">
        <title>Complete sequence of chromosome of Yersinia pestis Pestoides F.</title>
        <authorList>
            <consortium name="US DOE Joint Genome Institute"/>
            <person name="Copeland A."/>
            <person name="Lucas S."/>
            <person name="Lapidus A."/>
            <person name="Barry K."/>
            <person name="Detter J.C."/>
            <person name="Glavina del Rio T."/>
            <person name="Hammon N."/>
            <person name="Israni S."/>
            <person name="Dalin E."/>
            <person name="Tice H."/>
            <person name="Pitluck S."/>
            <person name="Di Bartolo G."/>
            <person name="Chain P."/>
            <person name="Malfatti S."/>
            <person name="Shin M."/>
            <person name="Vergez L."/>
            <person name="Schmutz J."/>
            <person name="Larimer F."/>
            <person name="Land M."/>
            <person name="Hauser L."/>
            <person name="Worsham P."/>
            <person name="Chu M."/>
            <person name="Bearden S."/>
            <person name="Garcia E."/>
            <person name="Richardson P."/>
        </authorList>
    </citation>
    <scope>NUCLEOTIDE SEQUENCE [LARGE SCALE GENOMIC DNA]</scope>
    <source>
        <strain>Pestoides F</strain>
    </source>
</reference>
<sequence length="539" mass="59348">MSVKGITPQELAAYGIHNVSEIVYNPSYDLLFEEETKPTLEGYERGTLTTTGAIAVDTGIFTGRSPKDKYIVRDAITQDTVWWADQGKGKNDNKPLSQEIWNHLKGLVTEQLSGKRLFVVDTFCGANADTRLQVRFITEVAWQAHFVKNMFIRPSDEELARFEPDFIVMNGAKCTNPQWKEQGLNSENFVAFNLTERMQLIGGTWYGGEMKKGMFSMMNYLLPLKGIASMHCSANVGEKGDVAIFFGLSGTGKTTLSTDPKRKLIGDDEHGWDDDGVFNFEGGCYAKTIKLSEEAEPDIYHAIKRDALLENVVVLADGTVDFNDGSKTENTRVSYPIYHIDNIVKPVSKAGHATKVIFLTADAFGVLPPVSRLTANQTQYHFLSGFTAKLAGTERGVTEPTPTFSACFGAAFLSLHPTQYAEVLVKRMQAVGAQAYLVNTGWNGTGKRISIKDTRAIIDAILNGEIDKAETFTLPIFDLAVPMALPGVNPDILDPRDTYADKAQWQEKAEDLAKRFATNFDKYTDTPAGAALVSAGPKI</sequence>
<dbReference type="EC" id="4.1.1.49" evidence="1"/>
<dbReference type="EMBL" id="CP000668">
    <property type="protein sequence ID" value="ABP38491.1"/>
    <property type="molecule type" value="Genomic_DNA"/>
</dbReference>
<dbReference type="RefSeq" id="WP_002208912.1">
    <property type="nucleotide sequence ID" value="NZ_CP009715.1"/>
</dbReference>
<dbReference type="SMR" id="A4TGS8"/>
<dbReference type="GeneID" id="57974462"/>
<dbReference type="KEGG" id="ypp:YPDSF_0065"/>
<dbReference type="PATRIC" id="fig|386656.14.peg.504"/>
<dbReference type="UniPathway" id="UPA00138"/>
<dbReference type="GO" id="GO:0005829">
    <property type="term" value="C:cytosol"/>
    <property type="evidence" value="ECO:0007669"/>
    <property type="project" value="TreeGrafter"/>
</dbReference>
<dbReference type="GO" id="GO:0005524">
    <property type="term" value="F:ATP binding"/>
    <property type="evidence" value="ECO:0007669"/>
    <property type="project" value="UniProtKB-UniRule"/>
</dbReference>
<dbReference type="GO" id="GO:0046872">
    <property type="term" value="F:metal ion binding"/>
    <property type="evidence" value="ECO:0007669"/>
    <property type="project" value="UniProtKB-KW"/>
</dbReference>
<dbReference type="GO" id="GO:0004612">
    <property type="term" value="F:phosphoenolpyruvate carboxykinase (ATP) activity"/>
    <property type="evidence" value="ECO:0007669"/>
    <property type="project" value="UniProtKB-UniRule"/>
</dbReference>
<dbReference type="GO" id="GO:0006094">
    <property type="term" value="P:gluconeogenesis"/>
    <property type="evidence" value="ECO:0007669"/>
    <property type="project" value="UniProtKB-UniRule"/>
</dbReference>
<dbReference type="CDD" id="cd00484">
    <property type="entry name" value="PEPCK_ATP"/>
    <property type="match status" value="1"/>
</dbReference>
<dbReference type="FunFam" id="2.170.8.10:FF:000001">
    <property type="entry name" value="Phosphoenolpyruvate carboxykinase (ATP)"/>
    <property type="match status" value="1"/>
</dbReference>
<dbReference type="FunFam" id="3.40.449.10:FF:000001">
    <property type="entry name" value="Phosphoenolpyruvate carboxykinase (ATP)"/>
    <property type="match status" value="1"/>
</dbReference>
<dbReference type="Gene3D" id="3.90.228.20">
    <property type="match status" value="1"/>
</dbReference>
<dbReference type="Gene3D" id="3.40.449.10">
    <property type="entry name" value="Phosphoenolpyruvate Carboxykinase, domain 1"/>
    <property type="match status" value="1"/>
</dbReference>
<dbReference type="Gene3D" id="2.170.8.10">
    <property type="entry name" value="Phosphoenolpyruvate Carboxykinase, domain 2"/>
    <property type="match status" value="1"/>
</dbReference>
<dbReference type="HAMAP" id="MF_00453">
    <property type="entry name" value="PEPCK_ATP"/>
    <property type="match status" value="1"/>
</dbReference>
<dbReference type="InterPro" id="IPR001272">
    <property type="entry name" value="PEP_carboxykinase_ATP"/>
</dbReference>
<dbReference type="InterPro" id="IPR013035">
    <property type="entry name" value="PEP_carboxykinase_C"/>
</dbReference>
<dbReference type="InterPro" id="IPR008210">
    <property type="entry name" value="PEP_carboxykinase_N"/>
</dbReference>
<dbReference type="InterPro" id="IPR015994">
    <property type="entry name" value="PEPCK_ATP_CS"/>
</dbReference>
<dbReference type="NCBIfam" id="TIGR00224">
    <property type="entry name" value="pckA"/>
    <property type="match status" value="1"/>
</dbReference>
<dbReference type="NCBIfam" id="NF006819">
    <property type="entry name" value="PRK09344.1-1"/>
    <property type="match status" value="1"/>
</dbReference>
<dbReference type="NCBIfam" id="NF006820">
    <property type="entry name" value="PRK09344.1-2"/>
    <property type="match status" value="1"/>
</dbReference>
<dbReference type="NCBIfam" id="NF006821">
    <property type="entry name" value="PRK09344.1-3"/>
    <property type="match status" value="1"/>
</dbReference>
<dbReference type="PANTHER" id="PTHR30031:SF0">
    <property type="entry name" value="PHOSPHOENOLPYRUVATE CARBOXYKINASE (ATP)"/>
    <property type="match status" value="1"/>
</dbReference>
<dbReference type="PANTHER" id="PTHR30031">
    <property type="entry name" value="PHOSPHOENOLPYRUVATE CARBOXYKINASE ATP"/>
    <property type="match status" value="1"/>
</dbReference>
<dbReference type="Pfam" id="PF01293">
    <property type="entry name" value="PEPCK_ATP"/>
    <property type="match status" value="1"/>
</dbReference>
<dbReference type="PIRSF" id="PIRSF006294">
    <property type="entry name" value="PEP_crbxkin"/>
    <property type="match status" value="1"/>
</dbReference>
<dbReference type="SUPFAM" id="SSF68923">
    <property type="entry name" value="PEP carboxykinase N-terminal domain"/>
    <property type="match status" value="1"/>
</dbReference>
<dbReference type="SUPFAM" id="SSF53795">
    <property type="entry name" value="PEP carboxykinase-like"/>
    <property type="match status" value="1"/>
</dbReference>
<dbReference type="PROSITE" id="PS00532">
    <property type="entry name" value="PEPCK_ATP"/>
    <property type="match status" value="1"/>
</dbReference>
<feature type="chain" id="PRO_1000026367" description="Phosphoenolpyruvate carboxykinase (ATP)">
    <location>
        <begin position="1"/>
        <end position="539"/>
    </location>
</feature>
<feature type="binding site" evidence="1">
    <location>
        <position position="64"/>
    </location>
    <ligand>
        <name>substrate</name>
    </ligand>
</feature>
<feature type="binding site" evidence="1">
    <location>
        <position position="206"/>
    </location>
    <ligand>
        <name>substrate</name>
    </ligand>
</feature>
<feature type="binding site" evidence="1">
    <location>
        <position position="212"/>
    </location>
    <ligand>
        <name>ATP</name>
        <dbReference type="ChEBI" id="CHEBI:30616"/>
    </ligand>
</feature>
<feature type="binding site" evidence="1">
    <location>
        <position position="212"/>
    </location>
    <ligand>
        <name>Mn(2+)</name>
        <dbReference type="ChEBI" id="CHEBI:29035"/>
    </ligand>
</feature>
<feature type="binding site" evidence="1">
    <location>
        <position position="212"/>
    </location>
    <ligand>
        <name>substrate</name>
    </ligand>
</feature>
<feature type="binding site" evidence="1">
    <location>
        <position position="231"/>
    </location>
    <ligand>
        <name>ATP</name>
        <dbReference type="ChEBI" id="CHEBI:30616"/>
    </ligand>
</feature>
<feature type="binding site" evidence="1">
    <location>
        <position position="231"/>
    </location>
    <ligand>
        <name>Mn(2+)</name>
        <dbReference type="ChEBI" id="CHEBI:29035"/>
    </ligand>
</feature>
<feature type="binding site" evidence="1">
    <location>
        <begin position="247"/>
        <end position="255"/>
    </location>
    <ligand>
        <name>ATP</name>
        <dbReference type="ChEBI" id="CHEBI:30616"/>
    </ligand>
</feature>
<feature type="binding site" evidence="1">
    <location>
        <position position="268"/>
    </location>
    <ligand>
        <name>Mn(2+)</name>
        <dbReference type="ChEBI" id="CHEBI:29035"/>
    </ligand>
</feature>
<feature type="binding site" evidence="1">
    <location>
        <position position="296"/>
    </location>
    <ligand>
        <name>ATP</name>
        <dbReference type="ChEBI" id="CHEBI:30616"/>
    </ligand>
</feature>
<feature type="binding site" evidence="1">
    <location>
        <position position="332"/>
    </location>
    <ligand>
        <name>ATP</name>
        <dbReference type="ChEBI" id="CHEBI:30616"/>
    </ligand>
</feature>
<feature type="binding site" evidence="1">
    <location>
        <position position="332"/>
    </location>
    <ligand>
        <name>substrate</name>
    </ligand>
</feature>
<feature type="binding site" evidence="1">
    <location>
        <begin position="448"/>
        <end position="449"/>
    </location>
    <ligand>
        <name>ATP</name>
        <dbReference type="ChEBI" id="CHEBI:30616"/>
    </ligand>
</feature>
<feature type="binding site" evidence="1">
    <location>
        <position position="454"/>
    </location>
    <ligand>
        <name>ATP</name>
        <dbReference type="ChEBI" id="CHEBI:30616"/>
    </ligand>
</feature>
<gene>
    <name evidence="1" type="primary">pckA</name>
    <name type="ordered locus">YPDSF_0065</name>
</gene>
<proteinExistence type="inferred from homology"/>
<name>PCKA_YERPP</name>
<comment type="function">
    <text evidence="1">Involved in the gluconeogenesis. Catalyzes the conversion of oxaloacetate (OAA) to phosphoenolpyruvate (PEP) through direct phosphoryl transfer between the nucleoside triphosphate and OAA.</text>
</comment>
<comment type="catalytic activity">
    <reaction evidence="1">
        <text>oxaloacetate + ATP = phosphoenolpyruvate + ADP + CO2</text>
        <dbReference type="Rhea" id="RHEA:18617"/>
        <dbReference type="ChEBI" id="CHEBI:16452"/>
        <dbReference type="ChEBI" id="CHEBI:16526"/>
        <dbReference type="ChEBI" id="CHEBI:30616"/>
        <dbReference type="ChEBI" id="CHEBI:58702"/>
        <dbReference type="ChEBI" id="CHEBI:456216"/>
        <dbReference type="EC" id="4.1.1.49"/>
    </reaction>
</comment>
<comment type="cofactor">
    <cofactor evidence="1">
        <name>Mn(2+)</name>
        <dbReference type="ChEBI" id="CHEBI:29035"/>
    </cofactor>
    <text evidence="1">Binds 1 Mn(2+) ion per subunit.</text>
</comment>
<comment type="pathway">
    <text evidence="1">Carbohydrate biosynthesis; gluconeogenesis.</text>
</comment>
<comment type="subunit">
    <text evidence="1">Monomer.</text>
</comment>
<comment type="subcellular location">
    <subcellularLocation>
        <location evidence="1">Cytoplasm</location>
    </subcellularLocation>
</comment>
<comment type="similarity">
    <text evidence="1">Belongs to the phosphoenolpyruvate carboxykinase (ATP) family.</text>
</comment>
<protein>
    <recommendedName>
        <fullName evidence="1">Phosphoenolpyruvate carboxykinase (ATP)</fullName>
        <shortName evidence="1">PCK</shortName>
        <shortName evidence="1">PEP carboxykinase</shortName>
        <shortName evidence="1">PEPCK</shortName>
        <ecNumber evidence="1">4.1.1.49</ecNumber>
    </recommendedName>
</protein>
<evidence type="ECO:0000255" key="1">
    <source>
        <dbReference type="HAMAP-Rule" id="MF_00453"/>
    </source>
</evidence>
<organism>
    <name type="scientific">Yersinia pestis (strain Pestoides F)</name>
    <dbReference type="NCBI Taxonomy" id="386656"/>
    <lineage>
        <taxon>Bacteria</taxon>
        <taxon>Pseudomonadati</taxon>
        <taxon>Pseudomonadota</taxon>
        <taxon>Gammaproteobacteria</taxon>
        <taxon>Enterobacterales</taxon>
        <taxon>Yersiniaceae</taxon>
        <taxon>Yersinia</taxon>
    </lineage>
</organism>
<keyword id="KW-0067">ATP-binding</keyword>
<keyword id="KW-0963">Cytoplasm</keyword>
<keyword id="KW-0210">Decarboxylase</keyword>
<keyword id="KW-0312">Gluconeogenesis</keyword>
<keyword id="KW-0456">Lyase</keyword>
<keyword id="KW-0464">Manganese</keyword>
<keyword id="KW-0479">Metal-binding</keyword>
<keyword id="KW-0547">Nucleotide-binding</keyword>
<accession>A4TGS8</accession>